<gene>
    <name evidence="1" type="primary">nadD</name>
    <name type="ordered locus">CLH_0567</name>
</gene>
<reference key="1">
    <citation type="submission" date="2008-05" db="EMBL/GenBank/DDBJ databases">
        <title>Complete genome sequence of Clostridium botulinum E3 str. Alaska E43.</title>
        <authorList>
            <person name="Brinkac L.M."/>
            <person name="Brown J.L."/>
            <person name="Bruce D."/>
            <person name="Detter C."/>
            <person name="Munk C."/>
            <person name="Smith L.A."/>
            <person name="Smith T.J."/>
            <person name="Sutton G."/>
            <person name="Brettin T.S."/>
        </authorList>
    </citation>
    <scope>NUCLEOTIDE SEQUENCE [LARGE SCALE GENOMIC DNA]</scope>
    <source>
        <strain>Alaska E43 / Type E3</strain>
    </source>
</reference>
<protein>
    <recommendedName>
        <fullName evidence="1">Probable nicotinate-nucleotide adenylyltransferase</fullName>
        <ecNumber evidence="1">2.7.7.18</ecNumber>
    </recommendedName>
    <alternativeName>
        <fullName evidence="1">Deamido-NAD(+) diphosphorylase</fullName>
    </alternativeName>
    <alternativeName>
        <fullName evidence="1">Deamido-NAD(+) pyrophosphorylase</fullName>
    </alternativeName>
    <alternativeName>
        <fullName evidence="1">Nicotinate mononucleotide adenylyltransferase</fullName>
        <shortName evidence="1">NaMN adenylyltransferase</shortName>
    </alternativeName>
</protein>
<organism>
    <name type="scientific">Clostridium botulinum (strain Alaska E43 / Type E3)</name>
    <dbReference type="NCBI Taxonomy" id="508767"/>
    <lineage>
        <taxon>Bacteria</taxon>
        <taxon>Bacillati</taxon>
        <taxon>Bacillota</taxon>
        <taxon>Clostridia</taxon>
        <taxon>Eubacteriales</taxon>
        <taxon>Clostridiaceae</taxon>
        <taxon>Clostridium</taxon>
    </lineage>
</organism>
<comment type="function">
    <text evidence="1">Catalyzes the reversible adenylation of nicotinate mononucleotide (NaMN) to nicotinic acid adenine dinucleotide (NaAD).</text>
</comment>
<comment type="catalytic activity">
    <reaction evidence="1">
        <text>nicotinate beta-D-ribonucleotide + ATP + H(+) = deamido-NAD(+) + diphosphate</text>
        <dbReference type="Rhea" id="RHEA:22860"/>
        <dbReference type="ChEBI" id="CHEBI:15378"/>
        <dbReference type="ChEBI" id="CHEBI:30616"/>
        <dbReference type="ChEBI" id="CHEBI:33019"/>
        <dbReference type="ChEBI" id="CHEBI:57502"/>
        <dbReference type="ChEBI" id="CHEBI:58437"/>
        <dbReference type="EC" id="2.7.7.18"/>
    </reaction>
</comment>
<comment type="pathway">
    <text evidence="1">Cofactor biosynthesis; NAD(+) biosynthesis; deamido-NAD(+) from nicotinate D-ribonucleotide: step 1/1.</text>
</comment>
<comment type="similarity">
    <text evidence="1">Belongs to the NadD family.</text>
</comment>
<feature type="chain" id="PRO_1000100769" description="Probable nicotinate-nucleotide adenylyltransferase">
    <location>
        <begin position="1"/>
        <end position="200"/>
    </location>
</feature>
<keyword id="KW-0067">ATP-binding</keyword>
<keyword id="KW-0520">NAD</keyword>
<keyword id="KW-0547">Nucleotide-binding</keyword>
<keyword id="KW-0548">Nucleotidyltransferase</keyword>
<keyword id="KW-0662">Pyridine nucleotide biosynthesis</keyword>
<keyword id="KW-0808">Transferase</keyword>
<sequence>MKRYGIIGGTFDPIHYGHLYIAYEAKKQLSLDKIIFMPAGNPPHKEGKKITSAKLRYEMVKSSIKDFSGFSISKYEIEKKGFSYTYETLEHFKNNDVELFFITGADCLMDIEKWESSDKILSLSNLVVFSRGGFSNKELIKQKEYIEKKYHVSIILLTLKRLEISSTDIRERIKNKERVDFFVPQPIIKLIEENNLYKEE</sequence>
<name>NADD_CLOBA</name>
<evidence type="ECO:0000255" key="1">
    <source>
        <dbReference type="HAMAP-Rule" id="MF_00244"/>
    </source>
</evidence>
<dbReference type="EC" id="2.7.7.18" evidence="1"/>
<dbReference type="EMBL" id="CP001078">
    <property type="protein sequence ID" value="ACD53691.1"/>
    <property type="molecule type" value="Genomic_DNA"/>
</dbReference>
<dbReference type="RefSeq" id="WP_012451543.1">
    <property type="nucleotide sequence ID" value="NC_010723.1"/>
</dbReference>
<dbReference type="SMR" id="B2V0B0"/>
<dbReference type="KEGG" id="cbt:CLH_0567"/>
<dbReference type="HOGENOM" id="CLU_069765_0_1_9"/>
<dbReference type="UniPathway" id="UPA00253">
    <property type="reaction ID" value="UER00332"/>
</dbReference>
<dbReference type="GO" id="GO:0005524">
    <property type="term" value="F:ATP binding"/>
    <property type="evidence" value="ECO:0007669"/>
    <property type="project" value="UniProtKB-KW"/>
</dbReference>
<dbReference type="GO" id="GO:0004515">
    <property type="term" value="F:nicotinate-nucleotide adenylyltransferase activity"/>
    <property type="evidence" value="ECO:0007669"/>
    <property type="project" value="UniProtKB-UniRule"/>
</dbReference>
<dbReference type="GO" id="GO:0009435">
    <property type="term" value="P:NAD biosynthetic process"/>
    <property type="evidence" value="ECO:0007669"/>
    <property type="project" value="UniProtKB-UniRule"/>
</dbReference>
<dbReference type="CDD" id="cd02165">
    <property type="entry name" value="NMNAT"/>
    <property type="match status" value="1"/>
</dbReference>
<dbReference type="Gene3D" id="3.40.50.620">
    <property type="entry name" value="HUPs"/>
    <property type="match status" value="1"/>
</dbReference>
<dbReference type="HAMAP" id="MF_00244">
    <property type="entry name" value="NaMN_adenylyltr"/>
    <property type="match status" value="1"/>
</dbReference>
<dbReference type="InterPro" id="IPR004821">
    <property type="entry name" value="Cyt_trans-like"/>
</dbReference>
<dbReference type="InterPro" id="IPR005248">
    <property type="entry name" value="NadD/NMNAT"/>
</dbReference>
<dbReference type="InterPro" id="IPR014729">
    <property type="entry name" value="Rossmann-like_a/b/a_fold"/>
</dbReference>
<dbReference type="NCBIfam" id="TIGR00125">
    <property type="entry name" value="cyt_tran_rel"/>
    <property type="match status" value="1"/>
</dbReference>
<dbReference type="NCBIfam" id="TIGR00482">
    <property type="entry name" value="nicotinate (nicotinamide) nucleotide adenylyltransferase"/>
    <property type="match status" value="1"/>
</dbReference>
<dbReference type="NCBIfam" id="NF000840">
    <property type="entry name" value="PRK00071.1-3"/>
    <property type="match status" value="1"/>
</dbReference>
<dbReference type="PANTHER" id="PTHR39321">
    <property type="entry name" value="NICOTINATE-NUCLEOTIDE ADENYLYLTRANSFERASE-RELATED"/>
    <property type="match status" value="1"/>
</dbReference>
<dbReference type="PANTHER" id="PTHR39321:SF3">
    <property type="entry name" value="PHOSPHOPANTETHEINE ADENYLYLTRANSFERASE"/>
    <property type="match status" value="1"/>
</dbReference>
<dbReference type="Pfam" id="PF01467">
    <property type="entry name" value="CTP_transf_like"/>
    <property type="match status" value="1"/>
</dbReference>
<dbReference type="SUPFAM" id="SSF52374">
    <property type="entry name" value="Nucleotidylyl transferase"/>
    <property type="match status" value="1"/>
</dbReference>
<proteinExistence type="inferred from homology"/>
<accession>B2V0B0</accession>